<keyword id="KW-0175">Coiled coil</keyword>
<keyword id="KW-0539">Nucleus</keyword>
<keyword id="KW-1185">Reference proteome</keyword>
<keyword id="KW-0678">Repressor</keyword>
<keyword id="KW-0804">Transcription</keyword>
<keyword id="KW-0805">Transcription regulation</keyword>
<proteinExistence type="evidence at transcript level"/>
<sequence>MPVHSREKKESNHNDMEVDYPENEGSSSEEDDSDSSSGSEEGDSSEMDDEDCERRRMECLDEMSTLEKQFTDLKDQLYKERLSQVDAKLQEVKADQAQEYLEPLANLQENMQIRTKVAGIYRELCLESVKNKHDCEIQAARQHCESEKLLLYDTVQSELEEKIRRLEEDRHSIDITSELWNDELQSRRKRKDPFSPDKKKKPVVVSGPYIVYMLQDLDILEDWTTIRKAMASFGPHRVKPEVTVKIEKHQHSARSEEGRLHYDGEWYGRGQTICIDKKDEFPTSAVITTINSDEVWFKRQDGSKSKLYISQLQKGKYSIKHI</sequence>
<accession>Q6AZT4</accession>
<gene>
    <name type="primary">brms1l</name>
</gene>
<name>BRM1L_XENLA</name>
<organism>
    <name type="scientific">Xenopus laevis</name>
    <name type="common">African clawed frog</name>
    <dbReference type="NCBI Taxonomy" id="8355"/>
    <lineage>
        <taxon>Eukaryota</taxon>
        <taxon>Metazoa</taxon>
        <taxon>Chordata</taxon>
        <taxon>Craniata</taxon>
        <taxon>Vertebrata</taxon>
        <taxon>Euteleostomi</taxon>
        <taxon>Amphibia</taxon>
        <taxon>Batrachia</taxon>
        <taxon>Anura</taxon>
        <taxon>Pipoidea</taxon>
        <taxon>Pipidae</taxon>
        <taxon>Xenopodinae</taxon>
        <taxon>Xenopus</taxon>
        <taxon>Xenopus</taxon>
    </lineage>
</organism>
<evidence type="ECO:0000250" key="1"/>
<evidence type="ECO:0000255" key="2"/>
<evidence type="ECO:0000256" key="3">
    <source>
        <dbReference type="SAM" id="MobiDB-lite"/>
    </source>
</evidence>
<evidence type="ECO:0000305" key="4"/>
<reference key="1">
    <citation type="submission" date="2004-07" db="EMBL/GenBank/DDBJ databases">
        <authorList>
            <consortium name="NIH - Xenopus Gene Collection (XGC) project"/>
        </authorList>
    </citation>
    <scope>NUCLEOTIDE SEQUENCE [LARGE SCALE MRNA]</scope>
    <source>
        <tissue>Embryo</tissue>
    </source>
</reference>
<dbReference type="EMBL" id="BC077352">
    <property type="protein sequence ID" value="AAH77352.1"/>
    <property type="molecule type" value="mRNA"/>
</dbReference>
<dbReference type="RefSeq" id="NP_001086722.1">
    <property type="nucleotide sequence ID" value="NM_001093253.1"/>
</dbReference>
<dbReference type="SMR" id="Q6AZT4"/>
<dbReference type="DNASU" id="446557"/>
<dbReference type="GeneID" id="446557"/>
<dbReference type="KEGG" id="xla:446557"/>
<dbReference type="AGR" id="Xenbase:XB-GENE-1002977"/>
<dbReference type="CTD" id="446557"/>
<dbReference type="Xenbase" id="XB-GENE-1002977">
    <property type="gene designation" value="brms1l.L"/>
</dbReference>
<dbReference type="OMA" id="XIYRELC"/>
<dbReference type="OrthoDB" id="20886at2759"/>
<dbReference type="Proteomes" id="UP000186698">
    <property type="component" value="Chromosome 8L"/>
</dbReference>
<dbReference type="Bgee" id="446557">
    <property type="expression patterns" value="Expressed in egg cell and 19 other cell types or tissues"/>
</dbReference>
<dbReference type="GO" id="GO:0070822">
    <property type="term" value="C:Sin3-type complex"/>
    <property type="evidence" value="ECO:0000318"/>
    <property type="project" value="GO_Central"/>
</dbReference>
<dbReference type="GO" id="GO:0042826">
    <property type="term" value="F:histone deacetylase binding"/>
    <property type="evidence" value="ECO:0000318"/>
    <property type="project" value="GO_Central"/>
</dbReference>
<dbReference type="GO" id="GO:0000122">
    <property type="term" value="P:negative regulation of transcription by RNA polymerase II"/>
    <property type="evidence" value="ECO:0000318"/>
    <property type="project" value="GO_Central"/>
</dbReference>
<dbReference type="FunFam" id="1.20.5.1500:FF:000002">
    <property type="entry name" value="breast cancer metastasis-suppressor 1-like protein-A"/>
    <property type="match status" value="1"/>
</dbReference>
<dbReference type="Gene3D" id="1.20.5.1500">
    <property type="match status" value="1"/>
</dbReference>
<dbReference type="InterPro" id="IPR013907">
    <property type="entry name" value="Sds3"/>
</dbReference>
<dbReference type="PANTHER" id="PTHR21964">
    <property type="entry name" value="BREAST CANCER METASTASIS-SUPPRESSOR 1"/>
    <property type="match status" value="1"/>
</dbReference>
<dbReference type="Pfam" id="PF08598">
    <property type="entry name" value="Sds3"/>
    <property type="match status" value="1"/>
</dbReference>
<dbReference type="SMART" id="SM01401">
    <property type="entry name" value="Sds3"/>
    <property type="match status" value="1"/>
</dbReference>
<comment type="function">
    <text evidence="1">Involved in the histone deacetylase (HDAC1)-dependent transcriptional repression activity.</text>
</comment>
<comment type="subcellular location">
    <subcellularLocation>
        <location evidence="1">Nucleus</location>
    </subcellularLocation>
</comment>
<comment type="similarity">
    <text evidence="4">Belongs to the BRMS1 family.</text>
</comment>
<protein>
    <recommendedName>
        <fullName>Breast cancer metastasis-suppressor 1-like protein</fullName>
    </recommendedName>
</protein>
<feature type="chain" id="PRO_0000305313" description="Breast cancer metastasis-suppressor 1-like protein">
    <location>
        <begin position="1"/>
        <end position="322"/>
    </location>
</feature>
<feature type="region of interest" description="Disordered" evidence="3">
    <location>
        <begin position="1"/>
        <end position="56"/>
    </location>
</feature>
<feature type="coiled-coil region" evidence="2">
    <location>
        <begin position="50"/>
        <end position="99"/>
    </location>
</feature>
<feature type="coiled-coil region" evidence="2">
    <location>
        <begin position="147"/>
        <end position="178"/>
    </location>
</feature>
<feature type="compositionally biased region" description="Basic and acidic residues" evidence="3">
    <location>
        <begin position="1"/>
        <end position="16"/>
    </location>
</feature>
<feature type="compositionally biased region" description="Acidic residues" evidence="3">
    <location>
        <begin position="17"/>
        <end position="51"/>
    </location>
</feature>